<name>EXOX_ECOL6</name>
<gene>
    <name type="primary">exoX</name>
    <name type="ordered locus">c2254</name>
</gene>
<sequence length="220" mass="25133">MLRIIDTETCGLQGGIVEIASVDVIDGKIVNPMSHLVRPDRPISPQAMAIHRITEAMVADKPWIEDVIPHYYGSEWYVAHNASFDRRVLPEMPGEWICTMKLARRLWPGIKYSNMALYKTRKLNVQTPPGLHHHRALYDCYITAALLIDIMNTSGWTAEQMADITGRPSLMTTFTFGKYRGKAVSDVAERDPGYLRWLFNNLDSMSPELRLTLKHYLENT</sequence>
<protein>
    <recommendedName>
        <fullName>Exodeoxyribonuclease 10</fullName>
        <ecNumber>3.1.11.-</ecNumber>
    </recommendedName>
    <alternativeName>
        <fullName>Exodeoxyribonuclease X</fullName>
        <shortName>Exo X</shortName>
        <shortName>Exonuclease X</shortName>
    </alternativeName>
</protein>
<dbReference type="EC" id="3.1.11.-"/>
<dbReference type="EMBL" id="AE014075">
    <property type="protein sequence ID" value="AAN80713.1"/>
    <property type="status" value="ALT_INIT"/>
    <property type="molecule type" value="Genomic_DNA"/>
</dbReference>
<dbReference type="RefSeq" id="WP_000944256.1">
    <property type="nucleotide sequence ID" value="NZ_CP051263.1"/>
</dbReference>
<dbReference type="SMR" id="P0AEK1"/>
<dbReference type="STRING" id="199310.c2254"/>
<dbReference type="DNASU" id="1036778"/>
<dbReference type="GeneID" id="93776111"/>
<dbReference type="KEGG" id="ecc:c2254"/>
<dbReference type="eggNOG" id="COG0847">
    <property type="taxonomic scope" value="Bacteria"/>
</dbReference>
<dbReference type="HOGENOM" id="CLU_047806_8_2_6"/>
<dbReference type="Proteomes" id="UP000001410">
    <property type="component" value="Chromosome"/>
</dbReference>
<dbReference type="GO" id="GO:0005829">
    <property type="term" value="C:cytosol"/>
    <property type="evidence" value="ECO:0007669"/>
    <property type="project" value="TreeGrafter"/>
</dbReference>
<dbReference type="GO" id="GO:0008408">
    <property type="term" value="F:3'-5' exonuclease activity"/>
    <property type="evidence" value="ECO:0007669"/>
    <property type="project" value="TreeGrafter"/>
</dbReference>
<dbReference type="GO" id="GO:0003676">
    <property type="term" value="F:nucleic acid binding"/>
    <property type="evidence" value="ECO:0007669"/>
    <property type="project" value="InterPro"/>
</dbReference>
<dbReference type="GO" id="GO:0045004">
    <property type="term" value="P:DNA replication proofreading"/>
    <property type="evidence" value="ECO:0007669"/>
    <property type="project" value="TreeGrafter"/>
</dbReference>
<dbReference type="CDD" id="cd06127">
    <property type="entry name" value="DEDDh"/>
    <property type="match status" value="1"/>
</dbReference>
<dbReference type="FunFam" id="3.30.420.10:FF:000020">
    <property type="entry name" value="Exodeoxyribonuclease X"/>
    <property type="match status" value="1"/>
</dbReference>
<dbReference type="Gene3D" id="3.30.420.10">
    <property type="entry name" value="Ribonuclease H-like superfamily/Ribonuclease H"/>
    <property type="match status" value="1"/>
</dbReference>
<dbReference type="InterPro" id="IPR013520">
    <property type="entry name" value="Exonuclease_RNaseT/DNA_pol3"/>
</dbReference>
<dbReference type="InterPro" id="IPR046768">
    <property type="entry name" value="ExoX-like_C"/>
</dbReference>
<dbReference type="InterPro" id="IPR012337">
    <property type="entry name" value="RNaseH-like_sf"/>
</dbReference>
<dbReference type="InterPro" id="IPR036397">
    <property type="entry name" value="RNaseH_sf"/>
</dbReference>
<dbReference type="NCBIfam" id="NF005937">
    <property type="entry name" value="PRK07983.1"/>
    <property type="match status" value="1"/>
</dbReference>
<dbReference type="PANTHER" id="PTHR30231">
    <property type="entry name" value="DNA POLYMERASE III SUBUNIT EPSILON"/>
    <property type="match status" value="1"/>
</dbReference>
<dbReference type="PANTHER" id="PTHR30231:SF37">
    <property type="entry name" value="EXODEOXYRIBONUCLEASE 10"/>
    <property type="match status" value="1"/>
</dbReference>
<dbReference type="Pfam" id="PF20600">
    <property type="entry name" value="ExoX-like_C"/>
    <property type="match status" value="1"/>
</dbReference>
<dbReference type="Pfam" id="PF00929">
    <property type="entry name" value="RNase_T"/>
    <property type="match status" value="1"/>
</dbReference>
<dbReference type="SMART" id="SM00479">
    <property type="entry name" value="EXOIII"/>
    <property type="match status" value="1"/>
</dbReference>
<dbReference type="SUPFAM" id="SSF53098">
    <property type="entry name" value="Ribonuclease H-like"/>
    <property type="match status" value="1"/>
</dbReference>
<comment type="function">
    <text evidence="1">Capable of degrading both single-strand and double-strand DNA with 3' to 5' polarity. Has higher affinity for ssDNA ends than for dsDNA (By similarity).</text>
</comment>
<comment type="cofactor">
    <cofactor evidence="1">
        <name>Mg(2+)</name>
        <dbReference type="ChEBI" id="CHEBI:18420"/>
    </cofactor>
</comment>
<comment type="sequence caution" evidence="2">
    <conflict type="erroneous initiation">
        <sequence resource="EMBL-CDS" id="AAN80713"/>
    </conflict>
</comment>
<reference key="1">
    <citation type="journal article" date="2002" name="Proc. Natl. Acad. Sci. U.S.A.">
        <title>Extensive mosaic structure revealed by the complete genome sequence of uropathogenic Escherichia coli.</title>
        <authorList>
            <person name="Welch R.A."/>
            <person name="Burland V."/>
            <person name="Plunkett G. III"/>
            <person name="Redford P."/>
            <person name="Roesch P."/>
            <person name="Rasko D."/>
            <person name="Buckles E.L."/>
            <person name="Liou S.-R."/>
            <person name="Boutin A."/>
            <person name="Hackett J."/>
            <person name="Stroud D."/>
            <person name="Mayhew G.F."/>
            <person name="Rose D.J."/>
            <person name="Zhou S."/>
            <person name="Schwartz D.C."/>
            <person name="Perna N.T."/>
            <person name="Mobley H.L.T."/>
            <person name="Donnenberg M.S."/>
            <person name="Blattner F.R."/>
        </authorList>
    </citation>
    <scope>NUCLEOTIDE SEQUENCE [LARGE SCALE GENOMIC DNA]</scope>
    <source>
        <strain>CFT073 / ATCC 700928 / UPEC</strain>
    </source>
</reference>
<accession>P0AEK1</accession>
<accession>P76281</accession>
<proteinExistence type="inferred from homology"/>
<organism>
    <name type="scientific">Escherichia coli O6:H1 (strain CFT073 / ATCC 700928 / UPEC)</name>
    <dbReference type="NCBI Taxonomy" id="199310"/>
    <lineage>
        <taxon>Bacteria</taxon>
        <taxon>Pseudomonadati</taxon>
        <taxon>Pseudomonadota</taxon>
        <taxon>Gammaproteobacteria</taxon>
        <taxon>Enterobacterales</taxon>
        <taxon>Enterobacteriaceae</taxon>
        <taxon>Escherichia</taxon>
    </lineage>
</organism>
<feature type="chain" id="PRO_0000087137" description="Exodeoxyribonuclease 10">
    <location>
        <begin position="1"/>
        <end position="220"/>
    </location>
</feature>
<evidence type="ECO:0000250" key="1"/>
<evidence type="ECO:0000305" key="2"/>
<keyword id="KW-0227">DNA damage</keyword>
<keyword id="KW-0234">DNA repair</keyword>
<keyword id="KW-0269">Exonuclease</keyword>
<keyword id="KW-0378">Hydrolase</keyword>
<keyword id="KW-0460">Magnesium</keyword>
<keyword id="KW-0540">Nuclease</keyword>
<keyword id="KW-1185">Reference proteome</keyword>